<sequence>MQNSEGGADSPASVALRPSAAAPPVPASPQRVLVQAASSAPKGAQMQPVSLPRVQQVPQQVQPAQHVYPAQVQYVEGGDAVYTNGAIRTAYTYNPEPQMYAPSSAASYFEAPGGAQVTVAASSPPAVPSHSMVGITMDVGGSPIVSSTGAYLIHGGMDSTRHSLAHTSRSSPATLEMAIENLQKSEGITSHKSGLLNSHLQWLLDNYETAEGVSLPRSSLYNHYLRHCQEHKLDPVNAASFGKLIRSVFMGLRTRRLGTRGNSKYHYYGIRLKPDSPLNRLQEDTQYMAMRQQPMHQKPRYRPAQKTDSLGDSGSHSSLHSTPEQTMAAQSQHHQQYIDVSHVFPEFPAPDLGSVLLQDGVTLHDVKALQLVYRRHCEATVDVVMNLQFHYIEKLWLSFWNSKASSSDGPTSLPASDEDPEGAVLPKDKLISLCQCDPILRWMRSCDHILYQALVEILIPDVLRPVPSTLTQAIRNFAKSLEGWLTNAMSDFPQQVIQTKVGVVSAFAQTLRRYTSLNHLAQAARAVLQNTSQINQMLSDLNRVDFANVQEQASWVCQCEESVVQRLEQDFKLTLQQQSSLDQWASWLDSVVTQVLKQHAGSPSFPKAARQFLLKWSFYSSMVIRDLTLRSAASFGSFHLIRLLYDEYMFYLVEHRVAEATGETPIAVMGEFNDLASLSLTLLDKDDMGDERRGSEAGPDAHSLGEPLVKRERSDPNHSLQGI</sequence>
<feature type="chain" id="PRO_0000380694" description="DNA-binding protein RFX2">
    <location>
        <begin position="1"/>
        <end position="723"/>
    </location>
</feature>
<feature type="DNA-binding region" description="RFX-type winged-helix" evidence="4">
    <location>
        <begin position="199"/>
        <end position="274"/>
    </location>
</feature>
<feature type="region of interest" description="Disordered" evidence="5">
    <location>
        <begin position="1"/>
        <end position="46"/>
    </location>
</feature>
<feature type="region of interest" description="Disordered" evidence="5">
    <location>
        <begin position="292"/>
        <end position="332"/>
    </location>
</feature>
<feature type="region of interest" description="Disordered" evidence="5">
    <location>
        <begin position="689"/>
        <end position="723"/>
    </location>
</feature>
<feature type="compositionally biased region" description="Low complexity" evidence="5">
    <location>
        <begin position="10"/>
        <end position="20"/>
    </location>
</feature>
<feature type="compositionally biased region" description="Low complexity" evidence="5">
    <location>
        <begin position="307"/>
        <end position="322"/>
    </location>
</feature>
<feature type="compositionally biased region" description="Polar residues" evidence="5">
    <location>
        <begin position="323"/>
        <end position="332"/>
    </location>
</feature>
<feature type="modified residue" description="Phosphoserine" evidence="2">
    <location>
        <position position="28"/>
    </location>
</feature>
<feature type="modified residue" description="Phosphoserine" evidence="1">
    <location>
        <position position="416"/>
    </location>
</feature>
<organism>
    <name type="scientific">Macaca fascicularis</name>
    <name type="common">Crab-eating macaque</name>
    <name type="synonym">Cynomolgus monkey</name>
    <dbReference type="NCBI Taxonomy" id="9541"/>
    <lineage>
        <taxon>Eukaryota</taxon>
        <taxon>Metazoa</taxon>
        <taxon>Chordata</taxon>
        <taxon>Craniata</taxon>
        <taxon>Vertebrata</taxon>
        <taxon>Euteleostomi</taxon>
        <taxon>Mammalia</taxon>
        <taxon>Eutheria</taxon>
        <taxon>Euarchontoglires</taxon>
        <taxon>Primates</taxon>
        <taxon>Haplorrhini</taxon>
        <taxon>Catarrhini</taxon>
        <taxon>Cercopithecidae</taxon>
        <taxon>Cercopithecinae</taxon>
        <taxon>Macaca</taxon>
    </lineage>
</organism>
<comment type="function">
    <text evidence="3">Transcription factor that acts as a key regulator of spermatogenesis. Acts by regulating expression of genes required for the haploid phase during spermiogenesis, such as genes required for cilium assembly and function. Recognizes and binds the X-box, a regulatory motif with DNA sequence 5'-GTNRCC(0-3N)RGYAAC-3' present on promoters. Probably activates transcription of the testis-specific histone gene H1-6.</text>
</comment>
<comment type="subunit">
    <text evidence="3">Homodimer; probably only forms homodimers in testis. Heterodimer; heterodimerizes with RFX1 and RFX3.</text>
</comment>
<comment type="subcellular location">
    <subcellularLocation>
        <location evidence="1 4">Nucleus</location>
    </subcellularLocation>
    <subcellularLocation>
        <location evidence="1">Cytoplasm</location>
    </subcellularLocation>
    <text evidence="1">Mainly expressed in the nucleus and at lower level in cytoplasm.</text>
</comment>
<comment type="similarity">
    <text evidence="4">Belongs to the RFX family.</text>
</comment>
<accession>Q4R3Z4</accession>
<evidence type="ECO:0000250" key="1">
    <source>
        <dbReference type="UniProtKB" id="B2GV50"/>
    </source>
</evidence>
<evidence type="ECO:0000250" key="2">
    <source>
        <dbReference type="UniProtKB" id="P48378"/>
    </source>
</evidence>
<evidence type="ECO:0000250" key="3">
    <source>
        <dbReference type="UniProtKB" id="P48379"/>
    </source>
</evidence>
<evidence type="ECO:0000255" key="4">
    <source>
        <dbReference type="PROSITE-ProRule" id="PRU00858"/>
    </source>
</evidence>
<evidence type="ECO:0000256" key="5">
    <source>
        <dbReference type="SAM" id="MobiDB-lite"/>
    </source>
</evidence>
<keyword id="KW-0970">Cilium biogenesis/degradation</keyword>
<keyword id="KW-0963">Cytoplasm</keyword>
<keyword id="KW-0221">Differentiation</keyword>
<keyword id="KW-0238">DNA-binding</keyword>
<keyword id="KW-0539">Nucleus</keyword>
<keyword id="KW-0597">Phosphoprotein</keyword>
<keyword id="KW-1185">Reference proteome</keyword>
<keyword id="KW-0744">Spermatogenesis</keyword>
<keyword id="KW-0804">Transcription</keyword>
<keyword id="KW-0805">Transcription regulation</keyword>
<reference key="1">
    <citation type="submission" date="2005-06" db="EMBL/GenBank/DDBJ databases">
        <title>DNA sequences of macaque genes expressed in brain or testis and its evolutionary implications.</title>
        <authorList>
            <consortium name="International consortium for macaque cDNA sequencing and analysis"/>
        </authorList>
    </citation>
    <scope>NUCLEOTIDE SEQUENCE [LARGE SCALE MRNA]</scope>
    <source>
        <tissue>Testis</tissue>
    </source>
</reference>
<gene>
    <name type="primary">RFX2</name>
    <name type="ORF">QtsA-13154</name>
</gene>
<proteinExistence type="evidence at transcript level"/>
<protein>
    <recommendedName>
        <fullName>DNA-binding protein RFX2</fullName>
    </recommendedName>
    <alternativeName>
        <fullName>Regulatory factor X 2</fullName>
    </alternativeName>
</protein>
<dbReference type="EMBL" id="AB179121">
    <property type="protein sequence ID" value="BAE02172.1"/>
    <property type="molecule type" value="mRNA"/>
</dbReference>
<dbReference type="SMR" id="Q4R3Z4"/>
<dbReference type="STRING" id="9541.ENSMFAP00000007239"/>
<dbReference type="eggNOG" id="KOG3712">
    <property type="taxonomic scope" value="Eukaryota"/>
</dbReference>
<dbReference type="Proteomes" id="UP000233100">
    <property type="component" value="Unplaced"/>
</dbReference>
<dbReference type="GO" id="GO:0005737">
    <property type="term" value="C:cytoplasm"/>
    <property type="evidence" value="ECO:0000250"/>
    <property type="project" value="UniProtKB"/>
</dbReference>
<dbReference type="GO" id="GO:0005634">
    <property type="term" value="C:nucleus"/>
    <property type="evidence" value="ECO:0000250"/>
    <property type="project" value="UniProtKB"/>
</dbReference>
<dbReference type="GO" id="GO:0003700">
    <property type="term" value="F:DNA-binding transcription factor activity"/>
    <property type="evidence" value="ECO:0000250"/>
    <property type="project" value="UniProtKB"/>
</dbReference>
<dbReference type="GO" id="GO:0000981">
    <property type="term" value="F:DNA-binding transcription factor activity, RNA polymerase II-specific"/>
    <property type="evidence" value="ECO:0007669"/>
    <property type="project" value="TreeGrafter"/>
</dbReference>
<dbReference type="GO" id="GO:0000978">
    <property type="term" value="F:RNA polymerase II cis-regulatory region sequence-specific DNA binding"/>
    <property type="evidence" value="ECO:0000250"/>
    <property type="project" value="UniProtKB"/>
</dbReference>
<dbReference type="GO" id="GO:0001675">
    <property type="term" value="P:acrosome assembly"/>
    <property type="evidence" value="ECO:0000250"/>
    <property type="project" value="UniProtKB"/>
</dbReference>
<dbReference type="GO" id="GO:0060271">
    <property type="term" value="P:cilium assembly"/>
    <property type="evidence" value="ECO:0000250"/>
    <property type="project" value="UniProtKB"/>
</dbReference>
<dbReference type="GO" id="GO:0006357">
    <property type="term" value="P:regulation of transcription by RNA polymerase II"/>
    <property type="evidence" value="ECO:0000250"/>
    <property type="project" value="UniProtKB"/>
</dbReference>
<dbReference type="GO" id="GO:0007286">
    <property type="term" value="P:spermatid development"/>
    <property type="evidence" value="ECO:0000250"/>
    <property type="project" value="UniProtKB"/>
</dbReference>
<dbReference type="FunFam" id="1.10.10.10:FF:000017">
    <property type="entry name" value="transcription factor RFX3 isoform X1"/>
    <property type="match status" value="1"/>
</dbReference>
<dbReference type="Gene3D" id="1.10.10.10">
    <property type="entry name" value="Winged helix-like DNA-binding domain superfamily/Winged helix DNA-binding domain"/>
    <property type="match status" value="1"/>
</dbReference>
<dbReference type="InterPro" id="IPR003150">
    <property type="entry name" value="DNA-bd_RFX"/>
</dbReference>
<dbReference type="InterPro" id="IPR039779">
    <property type="entry name" value="RFX-like"/>
</dbReference>
<dbReference type="InterPro" id="IPR007668">
    <property type="entry name" value="RFX1_trans_act"/>
</dbReference>
<dbReference type="InterPro" id="IPR036388">
    <property type="entry name" value="WH-like_DNA-bd_sf"/>
</dbReference>
<dbReference type="InterPro" id="IPR036390">
    <property type="entry name" value="WH_DNA-bd_sf"/>
</dbReference>
<dbReference type="PANTHER" id="PTHR12619:SF17">
    <property type="entry name" value="DNA-BINDING PROTEIN RFX2"/>
    <property type="match status" value="1"/>
</dbReference>
<dbReference type="PANTHER" id="PTHR12619">
    <property type="entry name" value="RFX TRANSCRIPTION FACTOR FAMILY"/>
    <property type="match status" value="1"/>
</dbReference>
<dbReference type="Pfam" id="PF25340">
    <property type="entry name" value="BCD_RFX"/>
    <property type="match status" value="1"/>
</dbReference>
<dbReference type="Pfam" id="PF04589">
    <property type="entry name" value="RFX1_trans_act"/>
    <property type="match status" value="1"/>
</dbReference>
<dbReference type="Pfam" id="PF02257">
    <property type="entry name" value="RFX_DNA_binding"/>
    <property type="match status" value="1"/>
</dbReference>
<dbReference type="SUPFAM" id="SSF46785">
    <property type="entry name" value="Winged helix' DNA-binding domain"/>
    <property type="match status" value="1"/>
</dbReference>
<dbReference type="PROSITE" id="PS51526">
    <property type="entry name" value="RFX_DBD"/>
    <property type="match status" value="1"/>
</dbReference>
<name>RFX2_MACFA</name>